<reference key="1">
    <citation type="journal article" date="2009" name="BMC Genomics">
        <title>Complete genome sequence of the sugarcane nitrogen-fixing endophyte Gluconacetobacter diazotrophicus Pal5.</title>
        <authorList>
            <person name="Bertalan M."/>
            <person name="Albano R."/>
            <person name="de Padua V."/>
            <person name="Rouws L."/>
            <person name="Rojas C."/>
            <person name="Hemerly A."/>
            <person name="Teixeira K."/>
            <person name="Schwab S."/>
            <person name="Araujo J."/>
            <person name="Oliveira A."/>
            <person name="Franca L."/>
            <person name="Magalhaes V."/>
            <person name="Alqueres S."/>
            <person name="Cardoso A."/>
            <person name="Almeida W."/>
            <person name="Loureiro M.M."/>
            <person name="Nogueira E."/>
            <person name="Cidade D."/>
            <person name="Oliveira D."/>
            <person name="Simao T."/>
            <person name="Macedo J."/>
            <person name="Valadao A."/>
            <person name="Dreschsel M."/>
            <person name="Freitas F."/>
            <person name="Vidal M."/>
            <person name="Guedes H."/>
            <person name="Rodrigues E."/>
            <person name="Meneses C."/>
            <person name="Brioso P."/>
            <person name="Pozzer L."/>
            <person name="Figueiredo D."/>
            <person name="Montano H."/>
            <person name="Junior J."/>
            <person name="de Souza Filho G."/>
            <person name="Martin Quintana Flores V."/>
            <person name="Ferreira B."/>
            <person name="Branco A."/>
            <person name="Gonzalez P."/>
            <person name="Guillobel H."/>
            <person name="Lemos M."/>
            <person name="Seibel L."/>
            <person name="Macedo J."/>
            <person name="Alves-Ferreira M."/>
            <person name="Sachetto-Martins G."/>
            <person name="Coelho A."/>
            <person name="Santos E."/>
            <person name="Amaral G."/>
            <person name="Neves A."/>
            <person name="Pacheco A.B."/>
            <person name="Carvalho D."/>
            <person name="Lery L."/>
            <person name="Bisch P."/>
            <person name="Rossle S.C."/>
            <person name="Urmenyi T."/>
            <person name="Rael Pereira A."/>
            <person name="Silva R."/>
            <person name="Rondinelli E."/>
            <person name="von Kruger W."/>
            <person name="Martins O."/>
            <person name="Baldani J.I."/>
            <person name="Ferreira P.C."/>
        </authorList>
    </citation>
    <scope>NUCLEOTIDE SEQUENCE [LARGE SCALE GENOMIC DNA]</scope>
    <source>
        <strain>ATCC 49037 / DSM 5601 / CCUG 37298 / CIP 103539 / LMG 7603 / PAl5</strain>
    </source>
</reference>
<reference key="2">
    <citation type="journal article" date="2010" name="Stand. Genomic Sci.">
        <title>Two genome sequences of the same bacterial strain, Gluconacetobacter diazotrophicus PAl 5, suggest a new standard in genome sequence submission.</title>
        <authorList>
            <person name="Giongo A."/>
            <person name="Tyler H.L."/>
            <person name="Zipperer U.N."/>
            <person name="Triplett E.W."/>
        </authorList>
    </citation>
    <scope>NUCLEOTIDE SEQUENCE [LARGE SCALE GENOMIC DNA]</scope>
    <source>
        <strain>ATCC 49037 / DSM 5601 / CCUG 37298 / CIP 103539 / LMG 7603 / PAl5</strain>
    </source>
</reference>
<accession>A9HRT9</accession>
<accession>B5ZLB6</accession>
<comment type="function">
    <text evidence="1">NDH-1 shuttles electrons from NADH, via FMN and iron-sulfur (Fe-S) centers, to quinones in the respiratory chain. The immediate electron acceptor for the enzyme in this species is believed to be ubiquinone. Couples the redox reaction to proton translocation (for every two electrons transferred, four hydrogen ions are translocated across the cytoplasmic membrane), and thus conserves the redox energy in a proton gradient.</text>
</comment>
<comment type="catalytic activity">
    <reaction evidence="1">
        <text>a quinone + NADH + 5 H(+)(in) = a quinol + NAD(+) + 4 H(+)(out)</text>
        <dbReference type="Rhea" id="RHEA:57888"/>
        <dbReference type="ChEBI" id="CHEBI:15378"/>
        <dbReference type="ChEBI" id="CHEBI:24646"/>
        <dbReference type="ChEBI" id="CHEBI:57540"/>
        <dbReference type="ChEBI" id="CHEBI:57945"/>
        <dbReference type="ChEBI" id="CHEBI:132124"/>
    </reaction>
</comment>
<comment type="subunit">
    <text evidence="1">NDH-1 is composed of 14 different subunits. Subunits NuoB, C, D, E, F, and G constitute the peripheral sector of the complex.</text>
</comment>
<comment type="subcellular location">
    <subcellularLocation>
        <location evidence="1">Cell inner membrane</location>
        <topology evidence="1">Peripheral membrane protein</topology>
        <orientation evidence="1">Cytoplasmic side</orientation>
    </subcellularLocation>
</comment>
<comment type="similarity">
    <text evidence="1">Belongs to the complex I 49 kDa subunit family.</text>
</comment>
<comment type="sequence caution" evidence="2">
    <conflict type="erroneous initiation">
        <sequence resource="EMBL-CDS" id="CAP56980"/>
    </conflict>
</comment>
<gene>
    <name evidence="1" type="primary">nuoD</name>
    <name type="ordered locus">GDI3037</name>
    <name type="ordered locus">Gdia_3331</name>
</gene>
<feature type="chain" id="PRO_0000357827" description="NADH-quinone oxidoreductase subunit D">
    <location>
        <begin position="1"/>
        <end position="416"/>
    </location>
</feature>
<organism>
    <name type="scientific">Gluconacetobacter diazotrophicus (strain ATCC 49037 / DSM 5601 / CCUG 37298 / CIP 103539 / LMG 7603 / PAl5)</name>
    <dbReference type="NCBI Taxonomy" id="272568"/>
    <lineage>
        <taxon>Bacteria</taxon>
        <taxon>Pseudomonadati</taxon>
        <taxon>Pseudomonadota</taxon>
        <taxon>Alphaproteobacteria</taxon>
        <taxon>Acetobacterales</taxon>
        <taxon>Acetobacteraceae</taxon>
        <taxon>Gluconacetobacter</taxon>
    </lineage>
</organism>
<sequence length="416" mass="46896">MSDIVLHEDIPESLLPGGEAAAAATHTVEIDSHALNFGPQHPSAHGVLRLVLEMEGEVVARAIPHIGLLHRGTEKLIEYKTYPKALPYFDRLDYVSPMCEEQAFALATEKLLGIDIPDRAKWIRVMFAEITRILNHILNLTALGLDCGAVTPALWGYEEREKLIEFYEAASGARFHANYFRPGGVSRDLPAGLEDRIAEWARQFPAWIDDLESLLTNNRIWKQRTVGIGIFTTEQALAWGFSGPCLRASGVPWDLRRAQPYDNYDKVEFNIPVARQGDCYDRYLIRVAEMRESVRIVEQCLAQMKPGPIKIQDHKITPPPRREMKRSMEALIHHFKLFTEGYHVPPGATYTAVESPKGEFGVYLVADGSNRPYRCKIRPTGFAHLQAIDEMSRRHMLADAVAIIGSLDLVFGEIDR</sequence>
<proteinExistence type="inferred from homology"/>
<keyword id="KW-0997">Cell inner membrane</keyword>
<keyword id="KW-1003">Cell membrane</keyword>
<keyword id="KW-0472">Membrane</keyword>
<keyword id="KW-0520">NAD</keyword>
<keyword id="KW-0874">Quinone</keyword>
<keyword id="KW-1185">Reference proteome</keyword>
<keyword id="KW-1278">Translocase</keyword>
<keyword id="KW-0813">Transport</keyword>
<keyword id="KW-0830">Ubiquinone</keyword>
<dbReference type="EC" id="7.1.1.-" evidence="1"/>
<dbReference type="EMBL" id="AM889285">
    <property type="protein sequence ID" value="CAP56980.1"/>
    <property type="status" value="ALT_INIT"/>
    <property type="molecule type" value="Genomic_DNA"/>
</dbReference>
<dbReference type="EMBL" id="CP001189">
    <property type="protein sequence ID" value="ACI53058.1"/>
    <property type="molecule type" value="Genomic_DNA"/>
</dbReference>
<dbReference type="RefSeq" id="WP_012554886.1">
    <property type="nucleotide sequence ID" value="NC_010125.1"/>
</dbReference>
<dbReference type="SMR" id="A9HRT9"/>
<dbReference type="STRING" id="272568.GDI3037"/>
<dbReference type="KEGG" id="gdi:GDI3037"/>
<dbReference type="KEGG" id="gdj:Gdia_3331"/>
<dbReference type="eggNOG" id="COG0649">
    <property type="taxonomic scope" value="Bacteria"/>
</dbReference>
<dbReference type="HOGENOM" id="CLU_015134_1_1_5"/>
<dbReference type="OrthoDB" id="9801496at2"/>
<dbReference type="Proteomes" id="UP000001176">
    <property type="component" value="Chromosome"/>
</dbReference>
<dbReference type="GO" id="GO:0005886">
    <property type="term" value="C:plasma membrane"/>
    <property type="evidence" value="ECO:0007669"/>
    <property type="project" value="UniProtKB-SubCell"/>
</dbReference>
<dbReference type="GO" id="GO:0051287">
    <property type="term" value="F:NAD binding"/>
    <property type="evidence" value="ECO:0007669"/>
    <property type="project" value="InterPro"/>
</dbReference>
<dbReference type="GO" id="GO:0050136">
    <property type="term" value="F:NADH:ubiquinone reductase (non-electrogenic) activity"/>
    <property type="evidence" value="ECO:0007669"/>
    <property type="project" value="UniProtKB-UniRule"/>
</dbReference>
<dbReference type="GO" id="GO:0048038">
    <property type="term" value="F:quinone binding"/>
    <property type="evidence" value="ECO:0007669"/>
    <property type="project" value="UniProtKB-KW"/>
</dbReference>
<dbReference type="FunFam" id="1.10.645.10:FF:000005">
    <property type="entry name" value="NADH-quinone oxidoreductase subunit D"/>
    <property type="match status" value="1"/>
</dbReference>
<dbReference type="Gene3D" id="1.10.645.10">
    <property type="entry name" value="Cytochrome-c3 Hydrogenase, chain B"/>
    <property type="match status" value="1"/>
</dbReference>
<dbReference type="HAMAP" id="MF_01358">
    <property type="entry name" value="NDH1_NuoD"/>
    <property type="match status" value="1"/>
</dbReference>
<dbReference type="InterPro" id="IPR001135">
    <property type="entry name" value="NADH_Q_OxRdtase_suD"/>
</dbReference>
<dbReference type="InterPro" id="IPR014029">
    <property type="entry name" value="NADH_UbQ_OxRdtase_49kDa_CS"/>
</dbReference>
<dbReference type="InterPro" id="IPR022885">
    <property type="entry name" value="NDH1_su_D/H"/>
</dbReference>
<dbReference type="InterPro" id="IPR029014">
    <property type="entry name" value="NiFe-Hase_large"/>
</dbReference>
<dbReference type="NCBIfam" id="TIGR01962">
    <property type="entry name" value="NuoD"/>
    <property type="match status" value="1"/>
</dbReference>
<dbReference type="NCBIfam" id="NF004739">
    <property type="entry name" value="PRK06075.1"/>
    <property type="match status" value="1"/>
</dbReference>
<dbReference type="PANTHER" id="PTHR11993:SF10">
    <property type="entry name" value="NADH DEHYDROGENASE [UBIQUINONE] IRON-SULFUR PROTEIN 2, MITOCHONDRIAL"/>
    <property type="match status" value="1"/>
</dbReference>
<dbReference type="PANTHER" id="PTHR11993">
    <property type="entry name" value="NADH-UBIQUINONE OXIDOREDUCTASE 49 KDA SUBUNIT"/>
    <property type="match status" value="1"/>
</dbReference>
<dbReference type="Pfam" id="PF00346">
    <property type="entry name" value="Complex1_49kDa"/>
    <property type="match status" value="1"/>
</dbReference>
<dbReference type="SUPFAM" id="SSF56762">
    <property type="entry name" value="HydB/Nqo4-like"/>
    <property type="match status" value="1"/>
</dbReference>
<dbReference type="PROSITE" id="PS00535">
    <property type="entry name" value="COMPLEX1_49K"/>
    <property type="match status" value="1"/>
</dbReference>
<protein>
    <recommendedName>
        <fullName evidence="1">NADH-quinone oxidoreductase subunit D</fullName>
        <ecNumber evidence="1">7.1.1.-</ecNumber>
    </recommendedName>
    <alternativeName>
        <fullName evidence="1">NADH dehydrogenase I subunit D</fullName>
    </alternativeName>
    <alternativeName>
        <fullName evidence="1">NDH-1 subunit D</fullName>
    </alternativeName>
</protein>
<evidence type="ECO:0000255" key="1">
    <source>
        <dbReference type="HAMAP-Rule" id="MF_01358"/>
    </source>
</evidence>
<evidence type="ECO:0000305" key="2"/>
<name>NUOD_GLUDA</name>